<evidence type="ECO:0000250" key="1"/>
<evidence type="ECO:0000255" key="2">
    <source>
        <dbReference type="PROSITE-ProRule" id="PRU00326"/>
    </source>
</evidence>
<evidence type="ECO:0000255" key="3">
    <source>
        <dbReference type="PROSITE-ProRule" id="PRU01081"/>
    </source>
</evidence>
<evidence type="ECO:0000256" key="4">
    <source>
        <dbReference type="SAM" id="MobiDB-lite"/>
    </source>
</evidence>
<evidence type="ECO:0000269" key="5">
    <source>
    </source>
</evidence>
<evidence type="ECO:0000305" key="6"/>
<evidence type="ECO:0000312" key="7">
    <source>
        <dbReference type="EMBL" id="EEE61886.1"/>
    </source>
</evidence>
<reference key="1">
    <citation type="journal article" date="2002" name="Nature">
        <title>Sequence and analysis of rice chromosome 4.</title>
        <authorList>
            <person name="Feng Q."/>
            <person name="Zhang Y."/>
            <person name="Hao P."/>
            <person name="Wang S."/>
            <person name="Fu G."/>
            <person name="Huang Y."/>
            <person name="Li Y."/>
            <person name="Zhu J."/>
            <person name="Liu Y."/>
            <person name="Hu X."/>
            <person name="Jia P."/>
            <person name="Zhang Y."/>
            <person name="Zhao Q."/>
            <person name="Ying K."/>
            <person name="Yu S."/>
            <person name="Tang Y."/>
            <person name="Weng Q."/>
            <person name="Zhang L."/>
            <person name="Lu Y."/>
            <person name="Mu J."/>
            <person name="Lu Y."/>
            <person name="Zhang L.S."/>
            <person name="Yu Z."/>
            <person name="Fan D."/>
            <person name="Liu X."/>
            <person name="Lu T."/>
            <person name="Li C."/>
            <person name="Wu Y."/>
            <person name="Sun T."/>
            <person name="Lei H."/>
            <person name="Li T."/>
            <person name="Hu H."/>
            <person name="Guan J."/>
            <person name="Wu M."/>
            <person name="Zhang R."/>
            <person name="Zhou B."/>
            <person name="Chen Z."/>
            <person name="Chen L."/>
            <person name="Jin Z."/>
            <person name="Wang R."/>
            <person name="Yin H."/>
            <person name="Cai Z."/>
            <person name="Ren S."/>
            <person name="Lv G."/>
            <person name="Gu W."/>
            <person name="Zhu G."/>
            <person name="Tu Y."/>
            <person name="Jia J."/>
            <person name="Zhang Y."/>
            <person name="Chen J."/>
            <person name="Kang H."/>
            <person name="Chen X."/>
            <person name="Shao C."/>
            <person name="Sun Y."/>
            <person name="Hu Q."/>
            <person name="Zhang X."/>
            <person name="Zhang W."/>
            <person name="Wang L."/>
            <person name="Ding C."/>
            <person name="Sheng H."/>
            <person name="Gu J."/>
            <person name="Chen S."/>
            <person name="Ni L."/>
            <person name="Zhu F."/>
            <person name="Chen W."/>
            <person name="Lan L."/>
            <person name="Lai Y."/>
            <person name="Cheng Z."/>
            <person name="Gu M."/>
            <person name="Jiang J."/>
            <person name="Li J."/>
            <person name="Hong G."/>
            <person name="Xue Y."/>
            <person name="Han B."/>
        </authorList>
    </citation>
    <scope>NUCLEOTIDE SEQUENCE [LARGE SCALE GENOMIC DNA]</scope>
    <source>
        <strain>cv. Nipponbare</strain>
    </source>
</reference>
<reference key="2">
    <citation type="journal article" date="2005" name="Nature">
        <title>The map-based sequence of the rice genome.</title>
        <authorList>
            <consortium name="International rice genome sequencing project (IRGSP)"/>
        </authorList>
    </citation>
    <scope>NUCLEOTIDE SEQUENCE [LARGE SCALE GENOMIC DNA]</scope>
    <source>
        <strain>cv. Nipponbare</strain>
    </source>
</reference>
<reference key="3">
    <citation type="journal article" date="2008" name="Nucleic Acids Res.">
        <title>The rice annotation project database (RAP-DB): 2008 update.</title>
        <authorList>
            <consortium name="The rice annotation project (RAP)"/>
        </authorList>
    </citation>
    <scope>GENOME REANNOTATION</scope>
    <source>
        <strain>cv. Nipponbare</strain>
    </source>
</reference>
<reference key="4">
    <citation type="journal article" date="2013" name="Rice">
        <title>Improvement of the Oryza sativa Nipponbare reference genome using next generation sequence and optical map data.</title>
        <authorList>
            <person name="Kawahara Y."/>
            <person name="de la Bastide M."/>
            <person name="Hamilton J.P."/>
            <person name="Kanamori H."/>
            <person name="McCombie W.R."/>
            <person name="Ouyang S."/>
            <person name="Schwartz D.C."/>
            <person name="Tanaka T."/>
            <person name="Wu J."/>
            <person name="Zhou S."/>
            <person name="Childs K.L."/>
            <person name="Davidson R.M."/>
            <person name="Lin H."/>
            <person name="Quesada-Ocampo L."/>
            <person name="Vaillancourt B."/>
            <person name="Sakai H."/>
            <person name="Lee S.S."/>
            <person name="Kim J."/>
            <person name="Numa H."/>
            <person name="Itoh T."/>
            <person name="Buell C.R."/>
            <person name="Matsumoto T."/>
        </authorList>
    </citation>
    <scope>GENOME REANNOTATION</scope>
    <source>
        <strain>cv. Nipponbare</strain>
    </source>
</reference>
<reference key="5">
    <citation type="journal article" date="2005" name="PLoS Biol.">
        <title>The genomes of Oryza sativa: a history of duplications.</title>
        <authorList>
            <person name="Yu J."/>
            <person name="Wang J."/>
            <person name="Lin W."/>
            <person name="Li S."/>
            <person name="Li H."/>
            <person name="Zhou J."/>
            <person name="Ni P."/>
            <person name="Dong W."/>
            <person name="Hu S."/>
            <person name="Zeng C."/>
            <person name="Zhang J."/>
            <person name="Zhang Y."/>
            <person name="Li R."/>
            <person name="Xu Z."/>
            <person name="Li S."/>
            <person name="Li X."/>
            <person name="Zheng H."/>
            <person name="Cong L."/>
            <person name="Lin L."/>
            <person name="Yin J."/>
            <person name="Geng J."/>
            <person name="Li G."/>
            <person name="Shi J."/>
            <person name="Liu J."/>
            <person name="Lv H."/>
            <person name="Li J."/>
            <person name="Wang J."/>
            <person name="Deng Y."/>
            <person name="Ran L."/>
            <person name="Shi X."/>
            <person name="Wang X."/>
            <person name="Wu Q."/>
            <person name="Li C."/>
            <person name="Ren X."/>
            <person name="Wang J."/>
            <person name="Wang X."/>
            <person name="Li D."/>
            <person name="Liu D."/>
            <person name="Zhang X."/>
            <person name="Ji Z."/>
            <person name="Zhao W."/>
            <person name="Sun Y."/>
            <person name="Zhang Z."/>
            <person name="Bao J."/>
            <person name="Han Y."/>
            <person name="Dong L."/>
            <person name="Ji J."/>
            <person name="Chen P."/>
            <person name="Wu S."/>
            <person name="Liu J."/>
            <person name="Xiao Y."/>
            <person name="Bu D."/>
            <person name="Tan J."/>
            <person name="Yang L."/>
            <person name="Ye C."/>
            <person name="Zhang J."/>
            <person name="Xu J."/>
            <person name="Zhou Y."/>
            <person name="Yu Y."/>
            <person name="Zhang B."/>
            <person name="Zhuang S."/>
            <person name="Wei H."/>
            <person name="Liu B."/>
            <person name="Lei M."/>
            <person name="Yu H."/>
            <person name="Li Y."/>
            <person name="Xu H."/>
            <person name="Wei S."/>
            <person name="He X."/>
            <person name="Fang L."/>
            <person name="Zhang Z."/>
            <person name="Zhang Y."/>
            <person name="Huang X."/>
            <person name="Su Z."/>
            <person name="Tong W."/>
            <person name="Li J."/>
            <person name="Tong Z."/>
            <person name="Li S."/>
            <person name="Ye J."/>
            <person name="Wang L."/>
            <person name="Fang L."/>
            <person name="Lei T."/>
            <person name="Chen C.-S."/>
            <person name="Chen H.-C."/>
            <person name="Xu Z."/>
            <person name="Li H."/>
            <person name="Huang H."/>
            <person name="Zhang F."/>
            <person name="Xu H."/>
            <person name="Li N."/>
            <person name="Zhao C."/>
            <person name="Li S."/>
            <person name="Dong L."/>
            <person name="Huang Y."/>
            <person name="Li L."/>
            <person name="Xi Y."/>
            <person name="Qi Q."/>
            <person name="Li W."/>
            <person name="Zhang B."/>
            <person name="Hu W."/>
            <person name="Zhang Y."/>
            <person name="Tian X."/>
            <person name="Jiao Y."/>
            <person name="Liang X."/>
            <person name="Jin J."/>
            <person name="Gao L."/>
            <person name="Zheng W."/>
            <person name="Hao B."/>
            <person name="Liu S.-M."/>
            <person name="Wang W."/>
            <person name="Yuan L."/>
            <person name="Cao M."/>
            <person name="McDermott J."/>
            <person name="Samudrala R."/>
            <person name="Wang J."/>
            <person name="Wong G.K.-S."/>
            <person name="Yang H."/>
        </authorList>
    </citation>
    <scope>NUCLEOTIDE SEQUENCE [LARGE SCALE GENOMIC DNA]</scope>
    <source>
        <strain>cv. Nipponbare</strain>
    </source>
</reference>
<reference key="6">
    <citation type="journal article" date="2003" name="Science">
        <title>Collection, mapping, and annotation of over 28,000 cDNA clones from japonica rice.</title>
        <authorList>
            <consortium name="The rice full-length cDNA consortium"/>
        </authorList>
    </citation>
    <scope>NUCLEOTIDE SEQUENCE [LARGE SCALE MRNA]</scope>
    <source>
        <strain>cv. Nipponbare</strain>
    </source>
</reference>
<reference key="7">
    <citation type="journal article" date="2001" name="Genes Genet. Syst.">
        <title>Auxin response factor family in rice.</title>
        <authorList>
            <person name="Sato Y."/>
            <person name="Nishimura A."/>
            <person name="Ito M."/>
            <person name="Ashikari M."/>
            <person name="Hirano H.-Y."/>
            <person name="Matsuoka M."/>
        </authorList>
    </citation>
    <scope>NUCLEOTIDE SEQUENCE [MRNA] OF 24-818</scope>
    <source>
        <strain>cv. Nipponbare</strain>
    </source>
</reference>
<reference key="8">
    <citation type="journal article" date="2007" name="Gene">
        <title>Genome-wide analysis of the auxin response factors (ARF) gene family in rice (Oryza sativa).</title>
        <authorList>
            <person name="Wang D."/>
            <person name="Pei K."/>
            <person name="Fu Y."/>
            <person name="Sun Z."/>
            <person name="Li S."/>
            <person name="Liu H."/>
            <person name="Tang K."/>
            <person name="Han B."/>
            <person name="Tao Y."/>
        </authorList>
    </citation>
    <scope>GENE FAMILY</scope>
    <scope>TISSUE SPECIFICITY</scope>
    <scope>NOMENCLATURE</scope>
</reference>
<organism>
    <name type="scientific">Oryza sativa subsp. japonica</name>
    <name type="common">Rice</name>
    <dbReference type="NCBI Taxonomy" id="39947"/>
    <lineage>
        <taxon>Eukaryota</taxon>
        <taxon>Viridiplantae</taxon>
        <taxon>Streptophyta</taxon>
        <taxon>Embryophyta</taxon>
        <taxon>Tracheophyta</taxon>
        <taxon>Spermatophyta</taxon>
        <taxon>Magnoliopsida</taxon>
        <taxon>Liliopsida</taxon>
        <taxon>Poales</taxon>
        <taxon>Poaceae</taxon>
        <taxon>BOP clade</taxon>
        <taxon>Oryzoideae</taxon>
        <taxon>Oryzeae</taxon>
        <taxon>Oryzinae</taxon>
        <taxon>Oryza</taxon>
        <taxon>Oryza sativa</taxon>
    </lineage>
</organism>
<sequence>MSSSSAASIGPPQPPPPPAPPEEEKKCLNSELWHACAGPLVCLPTVGTRVVYFPQGHSEQVAASTNKEVEGHIPNYPNLPAQLICQLHDVTMHADVETDEVYAQMTLQPLNPQEQNDAYLPAEMGIMSKQPTNYFCKTLTASDTSTHGGFSVPRRAAERVFPPLDFTQQPPAQELIARDIHDIEWKFRHIFRGQPKRHLLTTGWSVFVSAKRLVAGDSVLFIWNEKNQLLLGIRRASRPQTVMPSSVLSSDSMHIGLLAAAAHAAATNSRFTIFYNPRASPSEFVIPLSKYIKAVFHTRISVGMRFRMLFETEESSVRRYMGTITEVSDADPVRWPSSYWRSVKVGWDESTAGERPPRVSLWEIEPLTTFPMYPSLFPLRVKHPWYSGVASLHDDSNALMWLRGVAGEGGFQSLNFQSPGIGSWGQQRLHPSLLSSDHDQYQAVVAAAAASQSGGYLKQQFLHLQQPMQSPQEHCNLNPLLQQQILQQASQQQIINPDAQNIQTMLSPSAIQQQLQQLQQMQQVQNDQKQKIQPDQSYQVPTSAVLPSPTSLPSHLREKFGFSDPNANSSSFITSSSSDNMLDSSFLQGSSKAVDLSRFNQPVASEQQQQQQQAWKQKFMGSQSVSFGGSVLHNSPTSKDGSVENKIGRDVQNQSLFSPQVDSSSLLYNMVPNLTSNVSDGNLSTIPSGSTYLQNAMYGCLDDSSGLLQNTGENDPATRTFVKVYKSGSVGRSLDITRFSNYAELREELGQMFGIKGQLDDPDRSGWQLVFVDRENDVLLLGDDPWESFVNSVWYIKILSPEDVHKMGKQGNDPRYLS</sequence>
<feature type="chain" id="PRO_0000299269" description="Auxin response factor 12">
    <location>
        <begin position="1"/>
        <end position="818"/>
    </location>
</feature>
<feature type="domain" description="PB1" evidence="3">
    <location>
        <begin position="719"/>
        <end position="803"/>
    </location>
</feature>
<feature type="DNA-binding region" description="TF-B3" evidence="2">
    <location>
        <begin position="135"/>
        <end position="237"/>
    </location>
</feature>
<feature type="region of interest" description="Disordered" evidence="4">
    <location>
        <begin position="1"/>
        <end position="24"/>
    </location>
</feature>
<feature type="region of interest" description="Disordered" evidence="4">
    <location>
        <begin position="526"/>
        <end position="565"/>
    </location>
</feature>
<feature type="region of interest" description="Disordered" evidence="4">
    <location>
        <begin position="629"/>
        <end position="648"/>
    </location>
</feature>
<feature type="compositionally biased region" description="Low complexity" evidence="4">
    <location>
        <begin position="1"/>
        <end position="10"/>
    </location>
</feature>
<feature type="compositionally biased region" description="Pro residues" evidence="4">
    <location>
        <begin position="11"/>
        <end position="20"/>
    </location>
</feature>
<feature type="compositionally biased region" description="Polar residues" evidence="4">
    <location>
        <begin position="629"/>
        <end position="640"/>
    </location>
</feature>
<feature type="sequence conflict" description="In Ref. 6; AK071455." evidence="6" ref="6">
    <original>F</original>
    <variation>L</variation>
    <location>
        <position position="461"/>
    </location>
</feature>
<dbReference type="EMBL" id="AL606652">
    <property type="protein sequence ID" value="CAE03604.2"/>
    <property type="status" value="ALT_SEQ"/>
    <property type="molecule type" value="Genomic_DNA"/>
</dbReference>
<dbReference type="EMBL" id="AP008210">
    <property type="protein sequence ID" value="BAF16136.1"/>
    <property type="molecule type" value="Genomic_DNA"/>
</dbReference>
<dbReference type="EMBL" id="AP014960">
    <property type="protein sequence ID" value="BAS91572.1"/>
    <property type="molecule type" value="Genomic_DNA"/>
</dbReference>
<dbReference type="EMBL" id="CM000141">
    <property type="protein sequence ID" value="EEE61886.1"/>
    <property type="molecule type" value="Genomic_DNA"/>
</dbReference>
<dbReference type="EMBL" id="AK071455">
    <property type="status" value="NOT_ANNOTATED_CDS"/>
    <property type="molecule type" value="mRNA"/>
</dbReference>
<dbReference type="EMBL" id="AB071298">
    <property type="protein sequence ID" value="BAB85918.1"/>
    <property type="molecule type" value="mRNA"/>
</dbReference>
<dbReference type="RefSeq" id="XP_015636874.1">
    <property type="nucleotide sequence ID" value="XM_015781388.1"/>
</dbReference>
<dbReference type="SMR" id="Q0J951"/>
<dbReference type="FunCoup" id="Q0J951">
    <property type="interactions" value="1056"/>
</dbReference>
<dbReference type="STRING" id="39947.Q0J951"/>
<dbReference type="PaxDb" id="39947-Q0J951"/>
<dbReference type="EnsemblPlants" id="Os04t0671900-01">
    <property type="protein sequence ID" value="Os04t0671900-01"/>
    <property type="gene ID" value="Os04g0671900"/>
</dbReference>
<dbReference type="GeneID" id="4337363"/>
<dbReference type="Gramene" id="Os04t0671900-01">
    <property type="protein sequence ID" value="Os04t0671900-01"/>
    <property type="gene ID" value="Os04g0671900"/>
</dbReference>
<dbReference type="KEGG" id="dosa:Os04g0671900"/>
<dbReference type="eggNOG" id="ENOG502QPWF">
    <property type="taxonomic scope" value="Eukaryota"/>
</dbReference>
<dbReference type="HOGENOM" id="CLU_002626_1_0_1"/>
<dbReference type="InParanoid" id="Q0J951"/>
<dbReference type="OMA" id="WLEKKCL"/>
<dbReference type="OrthoDB" id="2016915at2759"/>
<dbReference type="PlantReactome" id="R-OSA-5608118">
    <property type="pathway name" value="Auxin signalling"/>
</dbReference>
<dbReference type="Proteomes" id="UP000000763">
    <property type="component" value="Chromosome 4"/>
</dbReference>
<dbReference type="Proteomes" id="UP000007752">
    <property type="component" value="Chromosome 4"/>
</dbReference>
<dbReference type="Proteomes" id="UP000059680">
    <property type="component" value="Chromosome 4"/>
</dbReference>
<dbReference type="ExpressionAtlas" id="Q0J951">
    <property type="expression patterns" value="baseline and differential"/>
</dbReference>
<dbReference type="GO" id="GO:0005634">
    <property type="term" value="C:nucleus"/>
    <property type="evidence" value="ECO:0007669"/>
    <property type="project" value="UniProtKB-SubCell"/>
</dbReference>
<dbReference type="GO" id="GO:0003677">
    <property type="term" value="F:DNA binding"/>
    <property type="evidence" value="ECO:0007669"/>
    <property type="project" value="UniProtKB-KW"/>
</dbReference>
<dbReference type="GO" id="GO:0009734">
    <property type="term" value="P:auxin-activated signaling pathway"/>
    <property type="evidence" value="ECO:0007669"/>
    <property type="project" value="UniProtKB-KW"/>
</dbReference>
<dbReference type="GO" id="GO:0006355">
    <property type="term" value="P:regulation of DNA-templated transcription"/>
    <property type="evidence" value="ECO:0007669"/>
    <property type="project" value="InterPro"/>
</dbReference>
<dbReference type="CDD" id="cd10017">
    <property type="entry name" value="B3_DNA"/>
    <property type="match status" value="1"/>
</dbReference>
<dbReference type="FunFam" id="2.30.30.1040:FF:000001">
    <property type="entry name" value="Auxin response factor"/>
    <property type="match status" value="1"/>
</dbReference>
<dbReference type="FunFam" id="2.40.330.10:FF:000001">
    <property type="entry name" value="Auxin response factor"/>
    <property type="match status" value="1"/>
</dbReference>
<dbReference type="FunFam" id="3.10.20.90:FF:000047">
    <property type="entry name" value="Auxin response factor"/>
    <property type="match status" value="1"/>
</dbReference>
<dbReference type="Gene3D" id="2.30.30.1040">
    <property type="match status" value="1"/>
</dbReference>
<dbReference type="Gene3D" id="2.40.330.10">
    <property type="entry name" value="DNA-binding pseudobarrel domain"/>
    <property type="match status" value="1"/>
</dbReference>
<dbReference type="Gene3D" id="3.10.20.90">
    <property type="entry name" value="Phosphatidylinositol 3-kinase Catalytic Subunit, Chain A, domain 1"/>
    <property type="match status" value="1"/>
</dbReference>
<dbReference type="InterPro" id="IPR010525">
    <property type="entry name" value="ARF_dom"/>
</dbReference>
<dbReference type="InterPro" id="IPR044835">
    <property type="entry name" value="ARF_plant"/>
</dbReference>
<dbReference type="InterPro" id="IPR033389">
    <property type="entry name" value="AUX/IAA_dom"/>
</dbReference>
<dbReference type="InterPro" id="IPR003340">
    <property type="entry name" value="B3_DNA-bd"/>
</dbReference>
<dbReference type="InterPro" id="IPR015300">
    <property type="entry name" value="DNA-bd_pseudobarrel_sf"/>
</dbReference>
<dbReference type="InterPro" id="IPR053793">
    <property type="entry name" value="PB1-like"/>
</dbReference>
<dbReference type="PANTHER" id="PTHR31384:SF185">
    <property type="entry name" value="AUXIN RESPONSE FACTOR 12"/>
    <property type="match status" value="1"/>
</dbReference>
<dbReference type="PANTHER" id="PTHR31384">
    <property type="entry name" value="AUXIN RESPONSE FACTOR 4-RELATED"/>
    <property type="match status" value="1"/>
</dbReference>
<dbReference type="Pfam" id="PF06507">
    <property type="entry name" value="ARF_AD"/>
    <property type="match status" value="1"/>
</dbReference>
<dbReference type="Pfam" id="PF02309">
    <property type="entry name" value="AUX_IAA"/>
    <property type="match status" value="1"/>
</dbReference>
<dbReference type="Pfam" id="PF02362">
    <property type="entry name" value="B3"/>
    <property type="match status" value="1"/>
</dbReference>
<dbReference type="SMART" id="SM01019">
    <property type="entry name" value="B3"/>
    <property type="match status" value="1"/>
</dbReference>
<dbReference type="SUPFAM" id="SSF54277">
    <property type="entry name" value="CAD &amp; PB1 domains"/>
    <property type="match status" value="1"/>
</dbReference>
<dbReference type="SUPFAM" id="SSF101936">
    <property type="entry name" value="DNA-binding pseudobarrel domain"/>
    <property type="match status" value="1"/>
</dbReference>
<dbReference type="PROSITE" id="PS50863">
    <property type="entry name" value="B3"/>
    <property type="match status" value="1"/>
</dbReference>
<dbReference type="PROSITE" id="PS51745">
    <property type="entry name" value="PB1"/>
    <property type="match status" value="1"/>
</dbReference>
<name>ARFL_ORYSJ</name>
<accession>Q0J951</accession>
<accession>B9FD89</accession>
<accession>Q7XPI3</accession>
<accession>Q8S977</accession>
<proteinExistence type="evidence at transcript level"/>
<comment type="function">
    <text>Auxin response factors (ARFs) are transcriptional factors that bind specifically to the DNA sequence 5'-TGTCTC-3' found in the auxin-responsive promoter elements (AuxREs).</text>
</comment>
<comment type="subunit">
    <text evidence="1">Homodimers and heterodimers.</text>
</comment>
<comment type="subcellular location">
    <subcellularLocation>
        <location evidence="2">Nucleus</location>
    </subcellularLocation>
</comment>
<comment type="tissue specificity">
    <text evidence="5">Expressed in roots, culms, leaves and young panicles.</text>
</comment>
<comment type="domain">
    <text>Interactions between auxin response factors (ARFs) and Aux/IAA proteins occur through their C-terminal dimerization domains III and IV.</text>
</comment>
<comment type="similarity">
    <text evidence="6">Belongs to the ARF family.</text>
</comment>
<comment type="sequence caution" evidence="6">
    <conflict type="erroneous gene model prediction">
        <sequence resource="EMBL-CDS" id="CAE03604"/>
    </conflict>
</comment>
<keyword id="KW-0927">Auxin signaling pathway</keyword>
<keyword id="KW-0238">DNA-binding</keyword>
<keyword id="KW-0539">Nucleus</keyword>
<keyword id="KW-1185">Reference proteome</keyword>
<keyword id="KW-0804">Transcription</keyword>
<keyword id="KW-0805">Transcription regulation</keyword>
<protein>
    <recommendedName>
        <fullName>Auxin response factor 12</fullName>
    </recommendedName>
    <alternativeName>
        <fullName>OsARF8</fullName>
    </alternativeName>
</protein>
<gene>
    <name type="primary">ARF12</name>
    <name type="synonym">ARF8</name>
    <name type="ordered locus">Os04g0671900</name>
    <name type="ordered locus">LOC_Os04g57610</name>
    <name evidence="7" type="ORF">OsJ_16583</name>
    <name type="ORF">OSJNBb0004A17.6</name>
</gene>